<reference key="1">
    <citation type="submission" date="2008-02" db="EMBL/GenBank/DDBJ databases">
        <title>Complete sequence of Escherichia coli C str. ATCC 8739.</title>
        <authorList>
            <person name="Copeland A."/>
            <person name="Lucas S."/>
            <person name="Lapidus A."/>
            <person name="Glavina del Rio T."/>
            <person name="Dalin E."/>
            <person name="Tice H."/>
            <person name="Bruce D."/>
            <person name="Goodwin L."/>
            <person name="Pitluck S."/>
            <person name="Kiss H."/>
            <person name="Brettin T."/>
            <person name="Detter J.C."/>
            <person name="Han C."/>
            <person name="Kuske C.R."/>
            <person name="Schmutz J."/>
            <person name="Larimer F."/>
            <person name="Land M."/>
            <person name="Hauser L."/>
            <person name="Kyrpides N."/>
            <person name="Mikhailova N."/>
            <person name="Ingram L."/>
            <person name="Richardson P."/>
        </authorList>
    </citation>
    <scope>NUCLEOTIDE SEQUENCE [LARGE SCALE GENOMIC DNA]</scope>
    <source>
        <strain>ATCC 8739 / DSM 1576 / NBRC 3972 / NCIMB 8545 / WDCM 00012 / Crooks</strain>
    </source>
</reference>
<gene>
    <name evidence="1" type="primary">rutD</name>
    <name type="ordered locus">EcolC_2586</name>
</gene>
<keyword id="KW-0378">Hydrolase</keyword>
<name>RUTD_ECOLC</name>
<proteinExistence type="inferred from homology"/>
<protein>
    <recommendedName>
        <fullName evidence="1">Putative carbamate hydrolase RutD</fullName>
        <ecNumber evidence="1">3.5.1.-</ecNumber>
    </recommendedName>
    <alternativeName>
        <fullName evidence="1">Aminohydrolase</fullName>
    </alternativeName>
</protein>
<sequence>MKLSLSPPPYADAPVVVLISGLGGSGSYWLPQLAVLEQEYQVVCYDQRGTGNNPDTLAEDYSIAQMAAELHQVLVAAGIEHYAVVGHALGALVGMQLALDYPASVTVLVSVNGWLRINAHTRRCFQVRERLLYSGGAQAWVEAQPLFLYPADWMAARAPRLEAEDALALAHFQGKNNLLRRLNALKRADFSHHADRIRCPVQIICASDDLLVPSACSSELHAALPDSQKMVMRYGGHACNVTDPETFNALLLNGLASLLHHREAAL</sequence>
<dbReference type="EC" id="3.5.1.-" evidence="1"/>
<dbReference type="EMBL" id="CP000946">
    <property type="protein sequence ID" value="ACA78217.1"/>
    <property type="molecule type" value="Genomic_DNA"/>
</dbReference>
<dbReference type="RefSeq" id="WP_001619304.1">
    <property type="nucleotide sequence ID" value="NZ_MTFT01000050.1"/>
</dbReference>
<dbReference type="SMR" id="B1IV88"/>
<dbReference type="ESTHER" id="ecoli-rutD">
    <property type="family name" value="RutD"/>
</dbReference>
<dbReference type="KEGG" id="ecl:EcolC_2586"/>
<dbReference type="HOGENOM" id="CLU_020336_50_1_6"/>
<dbReference type="GO" id="GO:0016020">
    <property type="term" value="C:membrane"/>
    <property type="evidence" value="ECO:0007669"/>
    <property type="project" value="TreeGrafter"/>
</dbReference>
<dbReference type="GO" id="GO:0016811">
    <property type="term" value="F:hydrolase activity, acting on carbon-nitrogen (but not peptide) bonds, in linear amides"/>
    <property type="evidence" value="ECO:0007669"/>
    <property type="project" value="InterPro"/>
</dbReference>
<dbReference type="GO" id="GO:0019740">
    <property type="term" value="P:nitrogen utilization"/>
    <property type="evidence" value="ECO:0007669"/>
    <property type="project" value="UniProtKB-UniRule"/>
</dbReference>
<dbReference type="GO" id="GO:0006212">
    <property type="term" value="P:uracil catabolic process"/>
    <property type="evidence" value="ECO:0007669"/>
    <property type="project" value="UniProtKB-UniRule"/>
</dbReference>
<dbReference type="FunFam" id="3.40.50.1820:FF:000052">
    <property type="entry name" value="Putative aminoacrylate hydrolase RutD"/>
    <property type="match status" value="1"/>
</dbReference>
<dbReference type="Gene3D" id="3.40.50.1820">
    <property type="entry name" value="alpha/beta hydrolase"/>
    <property type="match status" value="1"/>
</dbReference>
<dbReference type="HAMAP" id="MF_00832">
    <property type="entry name" value="RutD"/>
    <property type="match status" value="1"/>
</dbReference>
<dbReference type="InterPro" id="IPR000073">
    <property type="entry name" value="AB_hydrolase_1"/>
</dbReference>
<dbReference type="InterPro" id="IPR029058">
    <property type="entry name" value="AB_hydrolase_fold"/>
</dbReference>
<dbReference type="InterPro" id="IPR050266">
    <property type="entry name" value="AB_hydrolase_sf"/>
</dbReference>
<dbReference type="InterPro" id="IPR019913">
    <property type="entry name" value="Pyrimidine_utilisation_RutD"/>
</dbReference>
<dbReference type="NCBIfam" id="TIGR03611">
    <property type="entry name" value="RutD"/>
    <property type="match status" value="1"/>
</dbReference>
<dbReference type="PANTHER" id="PTHR43798:SF27">
    <property type="entry name" value="HYDROLASE ALPHA_BETA HYDROLASE FOLD FAMILY"/>
    <property type="match status" value="1"/>
</dbReference>
<dbReference type="PANTHER" id="PTHR43798">
    <property type="entry name" value="MONOACYLGLYCEROL LIPASE"/>
    <property type="match status" value="1"/>
</dbReference>
<dbReference type="Pfam" id="PF00561">
    <property type="entry name" value="Abhydrolase_1"/>
    <property type="match status" value="1"/>
</dbReference>
<dbReference type="SUPFAM" id="SSF53474">
    <property type="entry name" value="alpha/beta-Hydrolases"/>
    <property type="match status" value="1"/>
</dbReference>
<organism>
    <name type="scientific">Escherichia coli (strain ATCC 8739 / DSM 1576 / NBRC 3972 / NCIMB 8545 / WDCM 00012 / Crooks)</name>
    <dbReference type="NCBI Taxonomy" id="481805"/>
    <lineage>
        <taxon>Bacteria</taxon>
        <taxon>Pseudomonadati</taxon>
        <taxon>Pseudomonadota</taxon>
        <taxon>Gammaproteobacteria</taxon>
        <taxon>Enterobacterales</taxon>
        <taxon>Enterobacteriaceae</taxon>
        <taxon>Escherichia</taxon>
    </lineage>
</organism>
<feature type="chain" id="PRO_0000402938" description="Putative carbamate hydrolase RutD">
    <location>
        <begin position="1"/>
        <end position="266"/>
    </location>
</feature>
<feature type="domain" description="AB hydrolase-1" evidence="1">
    <location>
        <begin position="14"/>
        <end position="115"/>
    </location>
</feature>
<evidence type="ECO:0000255" key="1">
    <source>
        <dbReference type="HAMAP-Rule" id="MF_00832"/>
    </source>
</evidence>
<comment type="function">
    <text evidence="1">Involved in pyrimidine catabolism. May facilitate the hydrolysis of carbamate, a reaction that can also occur spontaneously.</text>
</comment>
<comment type="catalytic activity">
    <reaction evidence="1">
        <text>carbamate + 2 H(+) = NH4(+) + CO2</text>
        <dbReference type="Rhea" id="RHEA:15649"/>
        <dbReference type="ChEBI" id="CHEBI:13941"/>
        <dbReference type="ChEBI" id="CHEBI:15378"/>
        <dbReference type="ChEBI" id="CHEBI:16526"/>
        <dbReference type="ChEBI" id="CHEBI:28938"/>
    </reaction>
</comment>
<comment type="similarity">
    <text evidence="1">Belongs to the AB hydrolase superfamily. Hydrolase RutD family.</text>
</comment>
<accession>B1IV88</accession>